<evidence type="ECO:0000255" key="1">
    <source>
        <dbReference type="HAMAP-Rule" id="MF_01595"/>
    </source>
</evidence>
<organism>
    <name type="scientific">Geobacillus sp. (strain WCH70)</name>
    <dbReference type="NCBI Taxonomy" id="471223"/>
    <lineage>
        <taxon>Bacteria</taxon>
        <taxon>Bacillati</taxon>
        <taxon>Bacillota</taxon>
        <taxon>Bacilli</taxon>
        <taxon>Bacillales</taxon>
        <taxon>Anoxybacillaceae</taxon>
        <taxon>Geobacillus</taxon>
    </lineage>
</organism>
<keyword id="KW-0963">Cytoplasm</keyword>
<keyword id="KW-0460">Magnesium</keyword>
<keyword id="KW-0479">Metal-binding</keyword>
<keyword id="KW-0548">Nucleotidyltransferase</keyword>
<keyword id="KW-0694">RNA-binding</keyword>
<keyword id="KW-0808">Transferase</keyword>
<feature type="chain" id="PRO_1000215661" description="Polyribonucleotide nucleotidyltransferase">
    <location>
        <begin position="1"/>
        <end position="712"/>
    </location>
</feature>
<feature type="domain" description="KH" evidence="1">
    <location>
        <begin position="554"/>
        <end position="613"/>
    </location>
</feature>
<feature type="domain" description="S1 motif" evidence="1">
    <location>
        <begin position="623"/>
        <end position="691"/>
    </location>
</feature>
<feature type="binding site" evidence="1">
    <location>
        <position position="487"/>
    </location>
    <ligand>
        <name>Mg(2+)</name>
        <dbReference type="ChEBI" id="CHEBI:18420"/>
    </ligand>
</feature>
<feature type="binding site" evidence="1">
    <location>
        <position position="493"/>
    </location>
    <ligand>
        <name>Mg(2+)</name>
        <dbReference type="ChEBI" id="CHEBI:18420"/>
    </ligand>
</feature>
<name>PNP_GEOSW</name>
<dbReference type="EC" id="2.7.7.8" evidence="1"/>
<dbReference type="EMBL" id="CP001638">
    <property type="protein sequence ID" value="ACS24021.1"/>
    <property type="molecule type" value="Genomic_DNA"/>
</dbReference>
<dbReference type="SMR" id="C5D9D5"/>
<dbReference type="STRING" id="471223.GWCH70_1161"/>
<dbReference type="KEGG" id="gwc:GWCH70_1161"/>
<dbReference type="eggNOG" id="COG1185">
    <property type="taxonomic scope" value="Bacteria"/>
</dbReference>
<dbReference type="HOGENOM" id="CLU_004217_2_2_9"/>
<dbReference type="OrthoDB" id="9804305at2"/>
<dbReference type="GO" id="GO:0005829">
    <property type="term" value="C:cytosol"/>
    <property type="evidence" value="ECO:0007669"/>
    <property type="project" value="TreeGrafter"/>
</dbReference>
<dbReference type="GO" id="GO:0000175">
    <property type="term" value="F:3'-5'-RNA exonuclease activity"/>
    <property type="evidence" value="ECO:0007669"/>
    <property type="project" value="TreeGrafter"/>
</dbReference>
<dbReference type="GO" id="GO:0000287">
    <property type="term" value="F:magnesium ion binding"/>
    <property type="evidence" value="ECO:0007669"/>
    <property type="project" value="UniProtKB-UniRule"/>
</dbReference>
<dbReference type="GO" id="GO:0004654">
    <property type="term" value="F:polyribonucleotide nucleotidyltransferase activity"/>
    <property type="evidence" value="ECO:0007669"/>
    <property type="project" value="UniProtKB-UniRule"/>
</dbReference>
<dbReference type="GO" id="GO:0003723">
    <property type="term" value="F:RNA binding"/>
    <property type="evidence" value="ECO:0007669"/>
    <property type="project" value="UniProtKB-UniRule"/>
</dbReference>
<dbReference type="GO" id="GO:0006402">
    <property type="term" value="P:mRNA catabolic process"/>
    <property type="evidence" value="ECO:0007669"/>
    <property type="project" value="UniProtKB-UniRule"/>
</dbReference>
<dbReference type="GO" id="GO:0006396">
    <property type="term" value="P:RNA processing"/>
    <property type="evidence" value="ECO:0007669"/>
    <property type="project" value="InterPro"/>
</dbReference>
<dbReference type="CDD" id="cd02393">
    <property type="entry name" value="KH-I_PNPase"/>
    <property type="match status" value="1"/>
</dbReference>
<dbReference type="CDD" id="cd11363">
    <property type="entry name" value="RNase_PH_PNPase_1"/>
    <property type="match status" value="1"/>
</dbReference>
<dbReference type="CDD" id="cd11364">
    <property type="entry name" value="RNase_PH_PNPase_2"/>
    <property type="match status" value="1"/>
</dbReference>
<dbReference type="CDD" id="cd04472">
    <property type="entry name" value="S1_PNPase"/>
    <property type="match status" value="1"/>
</dbReference>
<dbReference type="FunFam" id="2.40.50.140:FF:000023">
    <property type="entry name" value="Polyribonucleotide nucleotidyltransferase"/>
    <property type="match status" value="1"/>
</dbReference>
<dbReference type="FunFam" id="3.30.1370.10:FF:000001">
    <property type="entry name" value="Polyribonucleotide nucleotidyltransferase"/>
    <property type="match status" value="1"/>
</dbReference>
<dbReference type="FunFam" id="3.30.230.70:FF:000001">
    <property type="entry name" value="Polyribonucleotide nucleotidyltransferase"/>
    <property type="match status" value="1"/>
</dbReference>
<dbReference type="FunFam" id="3.30.230.70:FF:000002">
    <property type="entry name" value="Polyribonucleotide nucleotidyltransferase"/>
    <property type="match status" value="1"/>
</dbReference>
<dbReference type="Gene3D" id="3.30.230.70">
    <property type="entry name" value="GHMP Kinase, N-terminal domain"/>
    <property type="match status" value="2"/>
</dbReference>
<dbReference type="Gene3D" id="3.30.1370.10">
    <property type="entry name" value="K Homology domain, type 1"/>
    <property type="match status" value="1"/>
</dbReference>
<dbReference type="Gene3D" id="2.40.50.140">
    <property type="entry name" value="Nucleic acid-binding proteins"/>
    <property type="match status" value="1"/>
</dbReference>
<dbReference type="HAMAP" id="MF_01595">
    <property type="entry name" value="PNPase"/>
    <property type="match status" value="1"/>
</dbReference>
<dbReference type="InterPro" id="IPR001247">
    <property type="entry name" value="ExoRNase_PH_dom1"/>
</dbReference>
<dbReference type="InterPro" id="IPR015847">
    <property type="entry name" value="ExoRNase_PH_dom2"/>
</dbReference>
<dbReference type="InterPro" id="IPR036345">
    <property type="entry name" value="ExoRNase_PH_dom2_sf"/>
</dbReference>
<dbReference type="InterPro" id="IPR004087">
    <property type="entry name" value="KH_dom"/>
</dbReference>
<dbReference type="InterPro" id="IPR004088">
    <property type="entry name" value="KH_dom_type_1"/>
</dbReference>
<dbReference type="InterPro" id="IPR036612">
    <property type="entry name" value="KH_dom_type_1_sf"/>
</dbReference>
<dbReference type="InterPro" id="IPR012340">
    <property type="entry name" value="NA-bd_OB-fold"/>
</dbReference>
<dbReference type="InterPro" id="IPR012162">
    <property type="entry name" value="PNPase"/>
</dbReference>
<dbReference type="InterPro" id="IPR027408">
    <property type="entry name" value="PNPase/RNase_PH_dom_sf"/>
</dbReference>
<dbReference type="InterPro" id="IPR015848">
    <property type="entry name" value="PNPase_PH_RNA-bd_bac/org-type"/>
</dbReference>
<dbReference type="InterPro" id="IPR020568">
    <property type="entry name" value="Ribosomal_Su5_D2-typ_SF"/>
</dbReference>
<dbReference type="InterPro" id="IPR003029">
    <property type="entry name" value="S1_domain"/>
</dbReference>
<dbReference type="NCBIfam" id="TIGR03591">
    <property type="entry name" value="polynuc_phos"/>
    <property type="match status" value="1"/>
</dbReference>
<dbReference type="NCBIfam" id="NF008805">
    <property type="entry name" value="PRK11824.1"/>
    <property type="match status" value="1"/>
</dbReference>
<dbReference type="PANTHER" id="PTHR11252">
    <property type="entry name" value="POLYRIBONUCLEOTIDE NUCLEOTIDYLTRANSFERASE"/>
    <property type="match status" value="1"/>
</dbReference>
<dbReference type="PANTHER" id="PTHR11252:SF0">
    <property type="entry name" value="POLYRIBONUCLEOTIDE NUCLEOTIDYLTRANSFERASE 1, MITOCHONDRIAL"/>
    <property type="match status" value="1"/>
</dbReference>
<dbReference type="Pfam" id="PF00013">
    <property type="entry name" value="KH_1"/>
    <property type="match status" value="1"/>
</dbReference>
<dbReference type="Pfam" id="PF03726">
    <property type="entry name" value="PNPase"/>
    <property type="match status" value="1"/>
</dbReference>
<dbReference type="Pfam" id="PF01138">
    <property type="entry name" value="RNase_PH"/>
    <property type="match status" value="2"/>
</dbReference>
<dbReference type="Pfam" id="PF03725">
    <property type="entry name" value="RNase_PH_C"/>
    <property type="match status" value="2"/>
</dbReference>
<dbReference type="Pfam" id="PF00575">
    <property type="entry name" value="S1"/>
    <property type="match status" value="1"/>
</dbReference>
<dbReference type="PIRSF" id="PIRSF005499">
    <property type="entry name" value="PNPase"/>
    <property type="match status" value="1"/>
</dbReference>
<dbReference type="SMART" id="SM00322">
    <property type="entry name" value="KH"/>
    <property type="match status" value="1"/>
</dbReference>
<dbReference type="SMART" id="SM00316">
    <property type="entry name" value="S1"/>
    <property type="match status" value="1"/>
</dbReference>
<dbReference type="SUPFAM" id="SSF54791">
    <property type="entry name" value="Eukaryotic type KH-domain (KH-domain type I)"/>
    <property type="match status" value="1"/>
</dbReference>
<dbReference type="SUPFAM" id="SSF50249">
    <property type="entry name" value="Nucleic acid-binding proteins"/>
    <property type="match status" value="1"/>
</dbReference>
<dbReference type="SUPFAM" id="SSF55666">
    <property type="entry name" value="Ribonuclease PH domain 2-like"/>
    <property type="match status" value="2"/>
</dbReference>
<dbReference type="SUPFAM" id="SSF54211">
    <property type="entry name" value="Ribosomal protein S5 domain 2-like"/>
    <property type="match status" value="2"/>
</dbReference>
<dbReference type="PROSITE" id="PS50084">
    <property type="entry name" value="KH_TYPE_1"/>
    <property type="match status" value="1"/>
</dbReference>
<dbReference type="PROSITE" id="PS50126">
    <property type="entry name" value="S1"/>
    <property type="match status" value="1"/>
</dbReference>
<reference key="1">
    <citation type="submission" date="2009-06" db="EMBL/GenBank/DDBJ databases">
        <title>Complete sequence of chromosome of Geopacillus sp. WCH70.</title>
        <authorList>
            <consortium name="US DOE Joint Genome Institute"/>
            <person name="Lucas S."/>
            <person name="Copeland A."/>
            <person name="Lapidus A."/>
            <person name="Glavina del Rio T."/>
            <person name="Dalin E."/>
            <person name="Tice H."/>
            <person name="Bruce D."/>
            <person name="Goodwin L."/>
            <person name="Pitluck S."/>
            <person name="Chertkov O."/>
            <person name="Brettin T."/>
            <person name="Detter J.C."/>
            <person name="Han C."/>
            <person name="Larimer F."/>
            <person name="Land M."/>
            <person name="Hauser L."/>
            <person name="Kyrpides N."/>
            <person name="Mikhailova N."/>
            <person name="Brumm P."/>
            <person name="Mead D.A."/>
            <person name="Richardson P."/>
        </authorList>
    </citation>
    <scope>NUCLEOTIDE SEQUENCE [LARGE SCALE GENOMIC DNA]</scope>
    <source>
        <strain>WCH70</strain>
    </source>
</reference>
<gene>
    <name evidence="1" type="primary">pnp</name>
    <name type="ordered locus">GWCH70_1161</name>
</gene>
<protein>
    <recommendedName>
        <fullName evidence="1">Polyribonucleotide nucleotidyltransferase</fullName>
        <ecNumber evidence="1">2.7.7.8</ecNumber>
    </recommendedName>
    <alternativeName>
        <fullName evidence="1">Polynucleotide phosphorylase</fullName>
        <shortName evidence="1">PNPase</shortName>
    </alternativeName>
</protein>
<comment type="function">
    <text evidence="1">Involved in mRNA degradation. Catalyzes the phosphorolysis of single-stranded polyribonucleotides processively in the 3'- to 5'-direction.</text>
</comment>
<comment type="catalytic activity">
    <reaction evidence="1">
        <text>RNA(n+1) + phosphate = RNA(n) + a ribonucleoside 5'-diphosphate</text>
        <dbReference type="Rhea" id="RHEA:22096"/>
        <dbReference type="Rhea" id="RHEA-COMP:14527"/>
        <dbReference type="Rhea" id="RHEA-COMP:17342"/>
        <dbReference type="ChEBI" id="CHEBI:43474"/>
        <dbReference type="ChEBI" id="CHEBI:57930"/>
        <dbReference type="ChEBI" id="CHEBI:140395"/>
        <dbReference type="EC" id="2.7.7.8"/>
    </reaction>
</comment>
<comment type="cofactor">
    <cofactor evidence="1">
        <name>Mg(2+)</name>
        <dbReference type="ChEBI" id="CHEBI:18420"/>
    </cofactor>
</comment>
<comment type="subcellular location">
    <subcellularLocation>
        <location evidence="1">Cytoplasm</location>
    </subcellularLocation>
</comment>
<comment type="similarity">
    <text evidence="1">Belongs to the polyribonucleotide nucleotidyltransferase family.</text>
</comment>
<sequence>MEQEKRIFSIDWAGRPLVVEIGQLAKQANGAVLVRYGDTVVLNTATASKEAKNVDFFPLTVNYEERLYAVGKIPGGFIKREGRPSEKAILASRLIDRPIRPLFAEGFRNEVQIVSMVMSVDQDCSPEMAALFGASLALTISDIPFEGPIAGVTVGRVDGEFVINPTVEQSEKSDIHLVVAGTKDAINMVEAGADEVPEEVILEAIMFGHEEVKRLIAFQEEIAAQVGKEKMEVVLYELDPQLEAEIRQLAEEDIKRAVQVPEKLARDAAIEEVKASVIAKYEEQEADEETLKQVNEILHKLVKEEVRRLITEEKIRPDGRKIDEIRPLSSEVGVLPRTHGSGLFTRGQTQVLSVCTLGALGDVQILDGLGIEETKRFMHHYNFPPFSVGETGPMRGPGRREIGHGALGERALEPVVPSEKEFPYTIRLVSEVLESNGSTSQASICASTLAMMDAGVPIKAPVAGIAMGLVKNDDNYTILTDIQGIEDHLGDMDFKVAGTAKGVTALQMDIKIKGLSREILEEALQQAKKGRMEILEHMMQTIREPRKELSKYAPKILTMQINPEKIREVIGPSGKQINKIIDETGVKIDIEQDGTIFISSVNEAMNQKAKQIIEDIVREVEVGQIYLGKVKRIEKFGAFVELFNGKDGLVHISELAEERVGRVEDVVSIGDEILVKVMEIDKQGRVNLSRKAVLRDKKEKKGKRPERHRMKP</sequence>
<accession>C5D9D5</accession>
<proteinExistence type="inferred from homology"/>